<feature type="signal peptide" description="Tat-type signal" evidence="1">
    <location>
        <begin position="1"/>
        <end position="30"/>
    </location>
</feature>
<feature type="chain" id="PRO_0000065706" description="Tyrosinase cofactor">
    <location>
        <begin position="31"/>
        <end position="146"/>
    </location>
</feature>
<feature type="region of interest" description="Disordered" evidence="2">
    <location>
        <begin position="65"/>
        <end position="85"/>
    </location>
</feature>
<feature type="compositionally biased region" description="Gly residues" evidence="2">
    <location>
        <begin position="69"/>
        <end position="85"/>
    </location>
</feature>
<keyword id="KW-0186">Copper</keyword>
<keyword id="KW-0470">Melanin biosynthesis</keyword>
<keyword id="KW-0732">Signal</keyword>
<proteinExistence type="inferred from homology"/>
<reference key="1">
    <citation type="journal article" date="1985" name="Gene">
        <title>The nucleotide sequence of the tyrosinase gene from Streptomyces antibioticus and characterization of the gene product.</title>
        <authorList>
            <person name="Bernan V."/>
            <person name="Filpula D."/>
            <person name="Herber W."/>
            <person name="Bibb M.J."/>
            <person name="Katz E."/>
        </authorList>
    </citation>
    <scope>NUCLEOTIDE SEQUENCE [GENOMIC DNA]</scope>
</reference>
<reference key="2">
    <citation type="journal article" date="1988" name="Gene">
        <title>A trans-acting gene is required for the phenotypic expression of a tyrosinase gene in Streptomyces.</title>
        <authorList>
            <person name="Lee Y.-H.W."/>
            <person name="Chen B.-F."/>
            <person name="Wu S.-Y."/>
            <person name="Leu W.-M."/>
            <person name="Lin J.-J."/>
            <person name="Chen C.C."/>
            <person name="Lo S.J."/>
        </authorList>
    </citation>
    <scope>FUNCTION</scope>
</reference>
<gene>
    <name type="primary">melC1</name>
</gene>
<organism>
    <name type="scientific">Streptomyces antibioticus</name>
    <dbReference type="NCBI Taxonomy" id="1890"/>
    <lineage>
        <taxon>Bacteria</taxon>
        <taxon>Bacillati</taxon>
        <taxon>Actinomycetota</taxon>
        <taxon>Actinomycetes</taxon>
        <taxon>Kitasatosporales</taxon>
        <taxon>Streptomycetaceae</taxon>
        <taxon>Streptomyces</taxon>
    </lineage>
</organism>
<accession>P17687</accession>
<protein>
    <recommendedName>
        <fullName>Tyrosinase cofactor</fullName>
    </recommendedName>
    <alternativeName>
        <fullName>ORF438</fullName>
    </alternativeName>
</protein>
<sequence length="146" mass="14883">MPELTRRRALGAAAVVAAGVPLVALPAARADDRGHHTPEVPGNPAASGAPAAFDEIYKGRRIQGRTVTDGGGHHGGGHGGDGHGGGHHGGGYAVFVDGVELHVMRNADGSWISVVSHYEPVDTPRAAARAAVDELQGARLLPFPSN</sequence>
<dbReference type="EMBL" id="M11582">
    <property type="protein sequence ID" value="AAA88570.1"/>
    <property type="molecule type" value="Genomic_DNA"/>
</dbReference>
<dbReference type="PIR" id="A23971">
    <property type="entry name" value="A23971"/>
</dbReference>
<dbReference type="RefSeq" id="WP_078632176.1">
    <property type="nucleotide sequence ID" value="NZ_CM007717.1"/>
</dbReference>
<dbReference type="SMR" id="P17687"/>
<dbReference type="STRING" id="1890.AFM16_02905"/>
<dbReference type="GO" id="GO:0005507">
    <property type="term" value="F:copper ion binding"/>
    <property type="evidence" value="ECO:0007669"/>
    <property type="project" value="InterPro"/>
</dbReference>
<dbReference type="GO" id="GO:0042438">
    <property type="term" value="P:melanin biosynthetic process"/>
    <property type="evidence" value="ECO:0007669"/>
    <property type="project" value="UniProtKB-KW"/>
</dbReference>
<dbReference type="Gene3D" id="3.30.1880.10">
    <property type="entry name" value="protein ne1242 domain like"/>
    <property type="match status" value="1"/>
</dbReference>
<dbReference type="InterPro" id="IPR023199">
    <property type="entry name" value="GriE/MELC1_sf"/>
</dbReference>
<dbReference type="InterPro" id="IPR010928">
    <property type="entry name" value="MelC1"/>
</dbReference>
<dbReference type="InterPro" id="IPR006311">
    <property type="entry name" value="TAT_signal"/>
</dbReference>
<dbReference type="NCBIfam" id="NF047833">
    <property type="entry name" value="TyroCdyMelC1"/>
    <property type="match status" value="1"/>
</dbReference>
<dbReference type="Pfam" id="PF06236">
    <property type="entry name" value="MelC1"/>
    <property type="match status" value="1"/>
</dbReference>
<dbReference type="PROSITE" id="PS51318">
    <property type="entry name" value="TAT"/>
    <property type="match status" value="1"/>
</dbReference>
<name>TYRT_STRAT</name>
<comment type="function">
    <text evidence="3">This protein may function to deliver copper to tyrosinase.</text>
</comment>
<comment type="PTM">
    <text>Predicted to be exported by the Tat system. The position of the signal peptide cleavage has not been experimentally proven.</text>
</comment>
<comment type="similarity">
    <text evidence="4">Belongs to the melC1 family.</text>
</comment>
<evidence type="ECO:0000255" key="1">
    <source>
        <dbReference type="PROSITE-ProRule" id="PRU00648"/>
    </source>
</evidence>
<evidence type="ECO:0000256" key="2">
    <source>
        <dbReference type="SAM" id="MobiDB-lite"/>
    </source>
</evidence>
<evidence type="ECO:0000269" key="3">
    <source>
    </source>
</evidence>
<evidence type="ECO:0000305" key="4"/>